<keyword id="KW-0067">ATP-binding</keyword>
<keyword id="KW-0436">Ligase</keyword>
<keyword id="KW-0547">Nucleotide-binding</keyword>
<keyword id="KW-0658">Purine biosynthesis</keyword>
<keyword id="KW-1185">Reference proteome</keyword>
<evidence type="ECO:0000255" key="1">
    <source>
        <dbReference type="HAMAP-Rule" id="MF_01928"/>
    </source>
</evidence>
<evidence type="ECO:0000305" key="2"/>
<accession>P72158</accession>
<name>PURK_PSEAE</name>
<dbReference type="EC" id="6.3.4.18" evidence="1"/>
<dbReference type="EMBL" id="U58364">
    <property type="protein sequence ID" value="AAB17258.1"/>
    <property type="molecule type" value="Genomic_DNA"/>
</dbReference>
<dbReference type="EMBL" id="AE004091">
    <property type="protein sequence ID" value="AAG08810.1"/>
    <property type="molecule type" value="Genomic_DNA"/>
</dbReference>
<dbReference type="PIR" id="G82967">
    <property type="entry name" value="G82967"/>
</dbReference>
<dbReference type="RefSeq" id="NP_254112.1">
    <property type="nucleotide sequence ID" value="NC_002516.2"/>
</dbReference>
<dbReference type="RefSeq" id="WP_003096798.1">
    <property type="nucleotide sequence ID" value="NZ_QZGE01000012.1"/>
</dbReference>
<dbReference type="SMR" id="P72158"/>
<dbReference type="FunCoup" id="P72158">
    <property type="interactions" value="515"/>
</dbReference>
<dbReference type="STRING" id="208964.PA5425"/>
<dbReference type="PaxDb" id="208964-PA5425"/>
<dbReference type="GeneID" id="878440"/>
<dbReference type="KEGG" id="pae:PA5425"/>
<dbReference type="PATRIC" id="fig|208964.12.peg.5685"/>
<dbReference type="PseudoCAP" id="PA5425"/>
<dbReference type="HOGENOM" id="CLU_011534_0_1_6"/>
<dbReference type="InParanoid" id="P72158"/>
<dbReference type="OrthoDB" id="9804625at2"/>
<dbReference type="PhylomeDB" id="P72158"/>
<dbReference type="BioCyc" id="PAER208964:G1FZ6-5552-MONOMER"/>
<dbReference type="UniPathway" id="UPA00074">
    <property type="reaction ID" value="UER00942"/>
</dbReference>
<dbReference type="Proteomes" id="UP000002438">
    <property type="component" value="Chromosome"/>
</dbReference>
<dbReference type="GO" id="GO:0005829">
    <property type="term" value="C:cytosol"/>
    <property type="evidence" value="ECO:0000318"/>
    <property type="project" value="GO_Central"/>
</dbReference>
<dbReference type="GO" id="GO:0034028">
    <property type="term" value="F:5-(carboxyamino)imidazole ribonucleotide synthase activity"/>
    <property type="evidence" value="ECO:0007669"/>
    <property type="project" value="UniProtKB-UniRule"/>
</dbReference>
<dbReference type="GO" id="GO:0005524">
    <property type="term" value="F:ATP binding"/>
    <property type="evidence" value="ECO:0007669"/>
    <property type="project" value="UniProtKB-KW"/>
</dbReference>
<dbReference type="GO" id="GO:0046872">
    <property type="term" value="F:metal ion binding"/>
    <property type="evidence" value="ECO:0007669"/>
    <property type="project" value="InterPro"/>
</dbReference>
<dbReference type="GO" id="GO:0004638">
    <property type="term" value="F:phosphoribosylaminoimidazole carboxylase activity"/>
    <property type="evidence" value="ECO:0007669"/>
    <property type="project" value="InterPro"/>
</dbReference>
<dbReference type="GO" id="GO:0006189">
    <property type="term" value="P:'de novo' IMP biosynthetic process"/>
    <property type="evidence" value="ECO:0007669"/>
    <property type="project" value="UniProtKB-UniRule"/>
</dbReference>
<dbReference type="FunFam" id="3.30.1490.20:FF:000015">
    <property type="entry name" value="N5-carboxyaminoimidazole ribonucleotide synthase"/>
    <property type="match status" value="1"/>
</dbReference>
<dbReference type="FunFam" id="3.30.470.20:FF:000029">
    <property type="entry name" value="N5-carboxyaminoimidazole ribonucleotide synthase"/>
    <property type="match status" value="1"/>
</dbReference>
<dbReference type="FunFam" id="3.40.50.20:FF:000016">
    <property type="entry name" value="N5-carboxyaminoimidazole ribonucleotide synthase"/>
    <property type="match status" value="1"/>
</dbReference>
<dbReference type="Gene3D" id="3.40.50.20">
    <property type="match status" value="1"/>
</dbReference>
<dbReference type="Gene3D" id="3.30.1490.20">
    <property type="entry name" value="ATP-grasp fold, A domain"/>
    <property type="match status" value="1"/>
</dbReference>
<dbReference type="Gene3D" id="3.30.470.20">
    <property type="entry name" value="ATP-grasp fold, B domain"/>
    <property type="match status" value="1"/>
</dbReference>
<dbReference type="HAMAP" id="MF_01928">
    <property type="entry name" value="PurK"/>
    <property type="match status" value="1"/>
</dbReference>
<dbReference type="InterPro" id="IPR011761">
    <property type="entry name" value="ATP-grasp"/>
</dbReference>
<dbReference type="InterPro" id="IPR003135">
    <property type="entry name" value="ATP-grasp_carboxylate-amine"/>
</dbReference>
<dbReference type="InterPro" id="IPR013815">
    <property type="entry name" value="ATP_grasp_subdomain_1"/>
</dbReference>
<dbReference type="InterPro" id="IPR016185">
    <property type="entry name" value="PreATP-grasp_dom_sf"/>
</dbReference>
<dbReference type="InterPro" id="IPR005875">
    <property type="entry name" value="PurK"/>
</dbReference>
<dbReference type="InterPro" id="IPR040686">
    <property type="entry name" value="PurK_C"/>
</dbReference>
<dbReference type="InterPro" id="IPR054350">
    <property type="entry name" value="PurT/PurK_preATP-grasp"/>
</dbReference>
<dbReference type="InterPro" id="IPR011054">
    <property type="entry name" value="Rudment_hybrid_motif"/>
</dbReference>
<dbReference type="NCBIfam" id="NF004676">
    <property type="entry name" value="PRK06019.1-2"/>
    <property type="match status" value="1"/>
</dbReference>
<dbReference type="NCBIfam" id="NF004679">
    <property type="entry name" value="PRK06019.1-5"/>
    <property type="match status" value="1"/>
</dbReference>
<dbReference type="NCBIfam" id="TIGR01161">
    <property type="entry name" value="purK"/>
    <property type="match status" value="1"/>
</dbReference>
<dbReference type="PANTHER" id="PTHR11609:SF5">
    <property type="entry name" value="PHOSPHORIBOSYLAMINOIMIDAZOLE CARBOXYLASE"/>
    <property type="match status" value="1"/>
</dbReference>
<dbReference type="PANTHER" id="PTHR11609">
    <property type="entry name" value="PURINE BIOSYNTHESIS PROTEIN 6/7, PUR6/7"/>
    <property type="match status" value="1"/>
</dbReference>
<dbReference type="Pfam" id="PF02222">
    <property type="entry name" value="ATP-grasp"/>
    <property type="match status" value="1"/>
</dbReference>
<dbReference type="Pfam" id="PF17769">
    <property type="entry name" value="PurK_C"/>
    <property type="match status" value="1"/>
</dbReference>
<dbReference type="Pfam" id="PF22660">
    <property type="entry name" value="RS_preATP-grasp-like"/>
    <property type="match status" value="1"/>
</dbReference>
<dbReference type="SUPFAM" id="SSF56059">
    <property type="entry name" value="Glutathione synthetase ATP-binding domain-like"/>
    <property type="match status" value="1"/>
</dbReference>
<dbReference type="SUPFAM" id="SSF52440">
    <property type="entry name" value="PreATP-grasp domain"/>
    <property type="match status" value="1"/>
</dbReference>
<dbReference type="SUPFAM" id="SSF51246">
    <property type="entry name" value="Rudiment single hybrid motif"/>
    <property type="match status" value="1"/>
</dbReference>
<dbReference type="PROSITE" id="PS50975">
    <property type="entry name" value="ATP_GRASP"/>
    <property type="match status" value="1"/>
</dbReference>
<feature type="chain" id="PRO_0000075002" description="N5-carboxyaminoimidazole ribonucleotide synthase">
    <location>
        <begin position="1"/>
        <end position="360"/>
    </location>
</feature>
<feature type="domain" description="ATP-grasp" evidence="1">
    <location>
        <begin position="102"/>
        <end position="285"/>
    </location>
</feature>
<feature type="binding site" evidence="1">
    <location>
        <position position="98"/>
    </location>
    <ligand>
        <name>ATP</name>
        <dbReference type="ChEBI" id="CHEBI:30616"/>
    </ligand>
</feature>
<feature type="binding site" evidence="1">
    <location>
        <position position="138"/>
    </location>
    <ligand>
        <name>ATP</name>
        <dbReference type="ChEBI" id="CHEBI:30616"/>
    </ligand>
</feature>
<feature type="binding site" evidence="1">
    <location>
        <begin position="143"/>
        <end position="149"/>
    </location>
    <ligand>
        <name>ATP</name>
        <dbReference type="ChEBI" id="CHEBI:30616"/>
    </ligand>
</feature>
<feature type="binding site" evidence="1">
    <location>
        <begin position="173"/>
        <end position="176"/>
    </location>
    <ligand>
        <name>ATP</name>
        <dbReference type="ChEBI" id="CHEBI:30616"/>
    </ligand>
</feature>
<feature type="binding site" evidence="1">
    <location>
        <position position="181"/>
    </location>
    <ligand>
        <name>ATP</name>
        <dbReference type="ChEBI" id="CHEBI:30616"/>
    </ligand>
</feature>
<feature type="binding site" evidence="1">
    <location>
        <position position="204"/>
    </location>
    <ligand>
        <name>ATP</name>
        <dbReference type="ChEBI" id="CHEBI:30616"/>
    </ligand>
</feature>
<feature type="binding site" evidence="1">
    <location>
        <begin position="255"/>
        <end position="256"/>
    </location>
    <ligand>
        <name>ATP</name>
        <dbReference type="ChEBI" id="CHEBI:30616"/>
    </ligand>
</feature>
<feature type="sequence conflict" description="In Ref. 1; AAB17258." evidence="2" ref="1">
    <original>L</original>
    <variation>V</variation>
    <location>
        <position position="124"/>
    </location>
</feature>
<feature type="sequence conflict" description="In Ref. 1; AAB17258." evidence="2" ref="1">
    <original>L</original>
    <variation>V</variation>
    <location>
        <position position="133"/>
    </location>
</feature>
<feature type="sequence conflict" description="In Ref. 1; AAB17258." evidence="2" ref="1">
    <original>F</original>
    <variation>L</variation>
    <location>
        <position position="196"/>
    </location>
</feature>
<feature type="sequence conflict" description="In Ref. 1; AAB17258." evidence="2" ref="1">
    <original>G</original>
    <variation>A</variation>
    <location>
        <position position="217"/>
    </location>
</feature>
<feature type="sequence conflict" description="In Ref. 1; AAB17258." evidence="2" ref="1">
    <original>E</original>
    <variation>D</variation>
    <location>
        <position position="353"/>
    </location>
</feature>
<reference key="1">
    <citation type="journal article" date="1996" name="Proc. Natl. Acad. Sci. U.S.A.">
        <title>Large-scale isolation of candidate virulence genes of Pseudomonas aeruginosa by in vivo selection.</title>
        <authorList>
            <person name="Wang J."/>
            <person name="Mushegian A."/>
            <person name="Lory S."/>
            <person name="Jin S."/>
        </authorList>
    </citation>
    <scope>NUCLEOTIDE SEQUENCE [GENOMIC DNA]</scope>
    <source>
        <strain>PAK</strain>
    </source>
</reference>
<reference key="2">
    <citation type="journal article" date="2000" name="Nature">
        <title>Complete genome sequence of Pseudomonas aeruginosa PAO1, an opportunistic pathogen.</title>
        <authorList>
            <person name="Stover C.K."/>
            <person name="Pham X.-Q.T."/>
            <person name="Erwin A.L."/>
            <person name="Mizoguchi S.D."/>
            <person name="Warrener P."/>
            <person name="Hickey M.J."/>
            <person name="Brinkman F.S.L."/>
            <person name="Hufnagle W.O."/>
            <person name="Kowalik D.J."/>
            <person name="Lagrou M."/>
            <person name="Garber R.L."/>
            <person name="Goltry L."/>
            <person name="Tolentino E."/>
            <person name="Westbrock-Wadman S."/>
            <person name="Yuan Y."/>
            <person name="Brody L.L."/>
            <person name="Coulter S.N."/>
            <person name="Folger K.R."/>
            <person name="Kas A."/>
            <person name="Larbig K."/>
            <person name="Lim R.M."/>
            <person name="Smith K.A."/>
            <person name="Spencer D.H."/>
            <person name="Wong G.K.-S."/>
            <person name="Wu Z."/>
            <person name="Paulsen I.T."/>
            <person name="Reizer J."/>
            <person name="Saier M.H. Jr."/>
            <person name="Hancock R.E.W."/>
            <person name="Lory S."/>
            <person name="Olson M.V."/>
        </authorList>
    </citation>
    <scope>NUCLEOTIDE SEQUENCE [LARGE SCALE GENOMIC DNA]</scope>
    <source>
        <strain>ATCC 15692 / DSM 22644 / CIP 104116 / JCM 14847 / LMG 12228 / 1C / PRS 101 / PAO1</strain>
    </source>
</reference>
<organism>
    <name type="scientific">Pseudomonas aeruginosa (strain ATCC 15692 / DSM 22644 / CIP 104116 / JCM 14847 / LMG 12228 / 1C / PRS 101 / PAO1)</name>
    <dbReference type="NCBI Taxonomy" id="208964"/>
    <lineage>
        <taxon>Bacteria</taxon>
        <taxon>Pseudomonadati</taxon>
        <taxon>Pseudomonadota</taxon>
        <taxon>Gammaproteobacteria</taxon>
        <taxon>Pseudomonadales</taxon>
        <taxon>Pseudomonadaceae</taxon>
        <taxon>Pseudomonas</taxon>
    </lineage>
</organism>
<comment type="function">
    <text evidence="1">Catalyzes the ATP-dependent conversion of 5-aminoimidazole ribonucleotide (AIR) and HCO(3)(-) to N5-carboxyaminoimidazole ribonucleotide (N5-CAIR).</text>
</comment>
<comment type="catalytic activity">
    <reaction evidence="1">
        <text>5-amino-1-(5-phospho-beta-D-ribosyl)imidazole + hydrogencarbonate + ATP = 5-carboxyamino-1-(5-phospho-D-ribosyl)imidazole + ADP + phosphate + 2 H(+)</text>
        <dbReference type="Rhea" id="RHEA:19317"/>
        <dbReference type="ChEBI" id="CHEBI:15378"/>
        <dbReference type="ChEBI" id="CHEBI:17544"/>
        <dbReference type="ChEBI" id="CHEBI:30616"/>
        <dbReference type="ChEBI" id="CHEBI:43474"/>
        <dbReference type="ChEBI" id="CHEBI:58730"/>
        <dbReference type="ChEBI" id="CHEBI:137981"/>
        <dbReference type="ChEBI" id="CHEBI:456216"/>
        <dbReference type="EC" id="6.3.4.18"/>
    </reaction>
</comment>
<comment type="pathway">
    <text evidence="1">Purine metabolism; IMP biosynthesis via de novo pathway; 5-amino-1-(5-phospho-D-ribosyl)imidazole-4-carboxylate from 5-amino-1-(5-phospho-D-ribosyl)imidazole (N5-CAIR route): step 1/2.</text>
</comment>
<comment type="subunit">
    <text evidence="1">Homodimer.</text>
</comment>
<comment type="similarity">
    <text evidence="1">Belongs to the PurK/PurT family.</text>
</comment>
<protein>
    <recommendedName>
        <fullName evidence="1">N5-carboxyaminoimidazole ribonucleotide synthase</fullName>
        <shortName evidence="1">N5-CAIR synthase</shortName>
        <ecNumber evidence="1">6.3.4.18</ecNumber>
    </recommendedName>
    <alternativeName>
        <fullName evidence="1">5-(carboxyamino)imidazole ribonucleotide synthetase</fullName>
    </alternativeName>
</protein>
<proteinExistence type="inferred from homology"/>
<gene>
    <name evidence="1" type="primary">purK</name>
    <name type="ordered locus">PA5425</name>
</gene>
<sequence>MKIGVIGGGQLGRMLALAGTPLGMNFAFLDPAPDACAASLGEHIRADYGDQEHLRQLADEVDLVTFEFESVPAETVAFLSQFVPVYPNAESLRIARDRWFEKSMFKDLGIPTPDFADVQSQADLDAAAAAIGLPAVLKTRTLGYDGKGQKVLRQPADVQGAFAELGSVPCILEGFVPFTGEVSLVAVRARDGETRFYPLVHNTHDSGILKLSVASSGHPLQALAEDYVGRVLARLDYVGVLAFEFFEVDGGLKANEIAPRVHNSGHWTIEGAECSQFENHLRAVAGLPLGSTAKVGESAMLNFIGAVPPVAQVVAVADCHLHHYGKAFKNGRKVGHATLRCADRATLQARIAEVEALIEA</sequence>